<proteinExistence type="inferred from homology"/>
<reference key="1">
    <citation type="journal article" date="2008" name="PLoS Genet.">
        <title>The genome of Borrelia recurrentis, the agent of deadly louse-borne relapsing fever, is a degraded subset of tick-borne Borrelia duttonii.</title>
        <authorList>
            <person name="Lescot M."/>
            <person name="Audic S."/>
            <person name="Robert C."/>
            <person name="Nguyen T.T."/>
            <person name="Blanc G."/>
            <person name="Cutler S.J."/>
            <person name="Wincker P."/>
            <person name="Couloux A."/>
            <person name="Claverie J.-M."/>
            <person name="Raoult D."/>
            <person name="Drancourt M."/>
        </authorList>
    </citation>
    <scope>NUCLEOTIDE SEQUENCE [LARGE SCALE GENOMIC DNA]</scope>
    <source>
        <strain>A1</strain>
    </source>
</reference>
<keyword id="KW-0021">Allosteric enzyme</keyword>
<keyword id="KW-0963">Cytoplasm</keyword>
<keyword id="KW-0378">Hydrolase</keyword>
<keyword id="KW-0479">Metal-binding</keyword>
<keyword id="KW-0645">Protease</keyword>
<keyword id="KW-0915">Sodium</keyword>
<keyword id="KW-0346">Stress response</keyword>
<keyword id="KW-0888">Threonine protease</keyword>
<feature type="chain" id="PRO_1000100874" description="ATP-dependent protease subunit HslV">
    <location>
        <begin position="1"/>
        <end position="180"/>
    </location>
</feature>
<feature type="active site" evidence="1">
    <location>
        <position position="6"/>
    </location>
</feature>
<feature type="binding site" evidence="1">
    <location>
        <position position="164"/>
    </location>
    <ligand>
        <name>Na(+)</name>
        <dbReference type="ChEBI" id="CHEBI:29101"/>
    </ligand>
</feature>
<feature type="binding site" evidence="1">
    <location>
        <position position="167"/>
    </location>
    <ligand>
        <name>Na(+)</name>
        <dbReference type="ChEBI" id="CHEBI:29101"/>
    </ligand>
</feature>
<feature type="binding site" evidence="1">
    <location>
        <position position="170"/>
    </location>
    <ligand>
        <name>Na(+)</name>
        <dbReference type="ChEBI" id="CHEBI:29101"/>
    </ligand>
</feature>
<gene>
    <name evidence="1" type="primary">hslV</name>
    <name type="ordered locus">BRE_303</name>
</gene>
<organism>
    <name type="scientific">Borrelia recurrentis (strain A1)</name>
    <dbReference type="NCBI Taxonomy" id="412418"/>
    <lineage>
        <taxon>Bacteria</taxon>
        <taxon>Pseudomonadati</taxon>
        <taxon>Spirochaetota</taxon>
        <taxon>Spirochaetia</taxon>
        <taxon>Spirochaetales</taxon>
        <taxon>Borreliaceae</taxon>
        <taxon>Borrelia</taxon>
    </lineage>
</organism>
<comment type="function">
    <text evidence="1">Protease subunit of a proteasome-like degradation complex believed to be a general protein degrading machinery.</text>
</comment>
<comment type="catalytic activity">
    <reaction evidence="1">
        <text>ATP-dependent cleavage of peptide bonds with broad specificity.</text>
        <dbReference type="EC" id="3.4.25.2"/>
    </reaction>
</comment>
<comment type="activity regulation">
    <text evidence="1">Allosterically activated by HslU binding.</text>
</comment>
<comment type="subunit">
    <text evidence="1">A double ring-shaped homohexamer of HslV is capped on each side by a ring-shaped HslU homohexamer. The assembly of the HslU/HslV complex is dependent on binding of ATP.</text>
</comment>
<comment type="subcellular location">
    <subcellularLocation>
        <location evidence="1">Cytoplasm</location>
    </subcellularLocation>
</comment>
<comment type="similarity">
    <text evidence="1">Belongs to the peptidase T1B family. HslV subfamily.</text>
</comment>
<accession>B5RRB6</accession>
<evidence type="ECO:0000255" key="1">
    <source>
        <dbReference type="HAMAP-Rule" id="MF_00248"/>
    </source>
</evidence>
<dbReference type="EC" id="3.4.25.2" evidence="1"/>
<dbReference type="EMBL" id="CP000993">
    <property type="protein sequence ID" value="ACH94550.1"/>
    <property type="molecule type" value="Genomic_DNA"/>
</dbReference>
<dbReference type="RefSeq" id="WP_012538802.1">
    <property type="nucleotide sequence ID" value="NZ_CP169983.1"/>
</dbReference>
<dbReference type="SMR" id="B5RRB6"/>
<dbReference type="KEGG" id="bre:BRE_303"/>
<dbReference type="HOGENOM" id="CLU_093872_1_0_12"/>
<dbReference type="Proteomes" id="UP000000612">
    <property type="component" value="Chromosome"/>
</dbReference>
<dbReference type="GO" id="GO:0009376">
    <property type="term" value="C:HslUV protease complex"/>
    <property type="evidence" value="ECO:0007669"/>
    <property type="project" value="UniProtKB-UniRule"/>
</dbReference>
<dbReference type="GO" id="GO:0005839">
    <property type="term" value="C:proteasome core complex"/>
    <property type="evidence" value="ECO:0007669"/>
    <property type="project" value="InterPro"/>
</dbReference>
<dbReference type="GO" id="GO:0046872">
    <property type="term" value="F:metal ion binding"/>
    <property type="evidence" value="ECO:0007669"/>
    <property type="project" value="UniProtKB-KW"/>
</dbReference>
<dbReference type="GO" id="GO:0004298">
    <property type="term" value="F:threonine-type endopeptidase activity"/>
    <property type="evidence" value="ECO:0007669"/>
    <property type="project" value="UniProtKB-KW"/>
</dbReference>
<dbReference type="GO" id="GO:0051603">
    <property type="term" value="P:proteolysis involved in protein catabolic process"/>
    <property type="evidence" value="ECO:0007669"/>
    <property type="project" value="InterPro"/>
</dbReference>
<dbReference type="CDD" id="cd01913">
    <property type="entry name" value="protease_HslV"/>
    <property type="match status" value="1"/>
</dbReference>
<dbReference type="Gene3D" id="3.60.20.10">
    <property type="entry name" value="Glutamine Phosphoribosylpyrophosphate, subunit 1, domain 1"/>
    <property type="match status" value="1"/>
</dbReference>
<dbReference type="HAMAP" id="MF_00248">
    <property type="entry name" value="HslV"/>
    <property type="match status" value="1"/>
</dbReference>
<dbReference type="InterPro" id="IPR022281">
    <property type="entry name" value="ATP-dep_Prtase_HsIV_su"/>
</dbReference>
<dbReference type="InterPro" id="IPR029055">
    <property type="entry name" value="Ntn_hydrolases_N"/>
</dbReference>
<dbReference type="InterPro" id="IPR001353">
    <property type="entry name" value="Proteasome_sua/b"/>
</dbReference>
<dbReference type="InterPro" id="IPR023333">
    <property type="entry name" value="Proteasome_suB-type"/>
</dbReference>
<dbReference type="NCBIfam" id="TIGR03692">
    <property type="entry name" value="ATP_dep_HslV"/>
    <property type="match status" value="1"/>
</dbReference>
<dbReference type="NCBIfam" id="NF003964">
    <property type="entry name" value="PRK05456.1"/>
    <property type="match status" value="1"/>
</dbReference>
<dbReference type="PANTHER" id="PTHR32194:SF0">
    <property type="entry name" value="ATP-DEPENDENT PROTEASE SUBUNIT HSLV"/>
    <property type="match status" value="1"/>
</dbReference>
<dbReference type="PANTHER" id="PTHR32194">
    <property type="entry name" value="METALLOPROTEASE TLDD"/>
    <property type="match status" value="1"/>
</dbReference>
<dbReference type="Pfam" id="PF00227">
    <property type="entry name" value="Proteasome"/>
    <property type="match status" value="1"/>
</dbReference>
<dbReference type="PIRSF" id="PIRSF039093">
    <property type="entry name" value="HslV"/>
    <property type="match status" value="1"/>
</dbReference>
<dbReference type="SUPFAM" id="SSF56235">
    <property type="entry name" value="N-terminal nucleophile aminohydrolases (Ntn hydrolases)"/>
    <property type="match status" value="1"/>
</dbReference>
<dbReference type="PROSITE" id="PS51476">
    <property type="entry name" value="PROTEASOME_BETA_2"/>
    <property type="match status" value="1"/>
</dbReference>
<protein>
    <recommendedName>
        <fullName evidence="1">ATP-dependent protease subunit HslV</fullName>
        <ecNumber evidence="1">3.4.25.2</ecNumber>
    </recommendedName>
</protein>
<name>HSLV_BORRA</name>
<sequence>MNFKGTTVIAIRRAGKTVVAADGQVTFGYTVLKSNAVKIRKLVNGKILAGFAGSTSDAITLFEKFEEKVKSREDGIIDIKRAAVDLAKDWRADKILHKLEAMMLVADSDNILLISGTGDVVEPEEDVISIGSGGNYAYSAALAYMENKKLSAADIAFKALKIAARVCIYTNSNIVLEEIG</sequence>